<proteinExistence type="inferred from homology"/>
<comment type="function">
    <text evidence="1">Cell division inhibitor that blocks the formation of polar Z ring septums. Rapidly oscillates between the poles of the cell to destabilize FtsZ filaments that have formed before they mature into polar Z rings. Prevents FtsZ polymerization.</text>
</comment>
<comment type="subunit">
    <text evidence="1">Interacts with MinD and FtsZ.</text>
</comment>
<comment type="similarity">
    <text evidence="1">Belongs to the MinC family.</text>
</comment>
<accession>B6JKX0</accession>
<gene>
    <name evidence="1" type="primary">minC</name>
    <name type="ordered locus">HPP12_0391</name>
</gene>
<sequence length="195" mass="22515">MLKTNQKNVHAFEIEKQEPEAVMEFLEKNHALLQYFLIIFKYDIEPEVKVILHKHQLLFLETNRPLNGRHIKTMSLKEETNHSKPNHSKTEPKTTIYERHIRSGEEIYSANHLIFLGNIHNGAKIISEGCVSVYGVCEGAIVCFGECLILKEVKSAQIVFQNKILSLKEVERLLVNKNIKIITKNDDILDIKEVL</sequence>
<protein>
    <recommendedName>
        <fullName evidence="1">Probable septum site-determining protein MinC</fullName>
    </recommendedName>
</protein>
<organism>
    <name type="scientific">Helicobacter pylori (strain P12)</name>
    <dbReference type="NCBI Taxonomy" id="570508"/>
    <lineage>
        <taxon>Bacteria</taxon>
        <taxon>Pseudomonadati</taxon>
        <taxon>Campylobacterota</taxon>
        <taxon>Epsilonproteobacteria</taxon>
        <taxon>Campylobacterales</taxon>
        <taxon>Helicobacteraceae</taxon>
        <taxon>Helicobacter</taxon>
    </lineage>
</organism>
<dbReference type="EMBL" id="CP001217">
    <property type="protein sequence ID" value="ACJ07548.1"/>
    <property type="molecule type" value="Genomic_DNA"/>
</dbReference>
<dbReference type="SMR" id="B6JKX0"/>
<dbReference type="KEGG" id="hpp:HPP12_0391"/>
<dbReference type="HOGENOM" id="CLU_114483_0_0_7"/>
<dbReference type="Proteomes" id="UP000008198">
    <property type="component" value="Chromosome"/>
</dbReference>
<dbReference type="GO" id="GO:0000902">
    <property type="term" value="P:cell morphogenesis"/>
    <property type="evidence" value="ECO:0007669"/>
    <property type="project" value="InterPro"/>
</dbReference>
<dbReference type="GO" id="GO:0000917">
    <property type="term" value="P:division septum assembly"/>
    <property type="evidence" value="ECO:0007669"/>
    <property type="project" value="UniProtKB-KW"/>
</dbReference>
<dbReference type="GO" id="GO:1901891">
    <property type="term" value="P:regulation of cell septum assembly"/>
    <property type="evidence" value="ECO:0007669"/>
    <property type="project" value="InterPro"/>
</dbReference>
<dbReference type="Gene3D" id="2.160.20.70">
    <property type="match status" value="1"/>
</dbReference>
<dbReference type="HAMAP" id="MF_00267">
    <property type="entry name" value="MinC"/>
    <property type="match status" value="1"/>
</dbReference>
<dbReference type="InterPro" id="IPR016098">
    <property type="entry name" value="CAP/MinC_C"/>
</dbReference>
<dbReference type="InterPro" id="IPR013033">
    <property type="entry name" value="MinC"/>
</dbReference>
<dbReference type="InterPro" id="IPR036145">
    <property type="entry name" value="MinC_C_sf"/>
</dbReference>
<dbReference type="InterPro" id="IPR005526">
    <property type="entry name" value="Septum_form_inhib_MinC_C"/>
</dbReference>
<dbReference type="NCBIfam" id="NF001818">
    <property type="entry name" value="PRK00556.1-2"/>
    <property type="match status" value="1"/>
</dbReference>
<dbReference type="PANTHER" id="PTHR34108">
    <property type="entry name" value="SEPTUM SITE-DETERMINING PROTEIN MINC"/>
    <property type="match status" value="1"/>
</dbReference>
<dbReference type="PANTHER" id="PTHR34108:SF1">
    <property type="entry name" value="SEPTUM SITE-DETERMINING PROTEIN MINC"/>
    <property type="match status" value="1"/>
</dbReference>
<dbReference type="Pfam" id="PF03775">
    <property type="entry name" value="MinC_C"/>
    <property type="match status" value="1"/>
</dbReference>
<dbReference type="SUPFAM" id="SSF63848">
    <property type="entry name" value="Cell-division inhibitor MinC, C-terminal domain"/>
    <property type="match status" value="1"/>
</dbReference>
<name>MINC_HELP2</name>
<keyword id="KW-0131">Cell cycle</keyword>
<keyword id="KW-0132">Cell division</keyword>
<keyword id="KW-0717">Septation</keyword>
<feature type="chain" id="PRO_1000114282" description="Probable septum site-determining protein MinC">
    <location>
        <begin position="1"/>
        <end position="195"/>
    </location>
</feature>
<reference key="1">
    <citation type="submission" date="2008-10" db="EMBL/GenBank/DDBJ databases">
        <title>The complete genome sequence of Helicobacter pylori strain P12.</title>
        <authorList>
            <person name="Fischer W."/>
            <person name="Windhager L."/>
            <person name="Karnholz A."/>
            <person name="Zeiller M."/>
            <person name="Zimmer R."/>
            <person name="Haas R."/>
        </authorList>
    </citation>
    <scope>NUCLEOTIDE SEQUENCE [LARGE SCALE GENOMIC DNA]</scope>
    <source>
        <strain>P12</strain>
    </source>
</reference>
<evidence type="ECO:0000255" key="1">
    <source>
        <dbReference type="HAMAP-Rule" id="MF_00267"/>
    </source>
</evidence>